<comment type="function">
    <text evidence="2">Regulates transcriptional attenuation of the pyrimidine nucleotide (pyr) operon by binding in a uridine-dependent manner to specific sites on pyr mRNA. This disrupts an antiterminator hairpin in the RNA and favors formation of a downstream transcription terminator, leading to a reduced expression of downstream genes.</text>
</comment>
<comment type="function">
    <text evidence="2">Also displays a weak uracil phosphoribosyltransferase activity which is not physiologically significant.</text>
</comment>
<comment type="catalytic activity">
    <reaction evidence="2">
        <text>UMP + diphosphate = 5-phospho-alpha-D-ribose 1-diphosphate + uracil</text>
        <dbReference type="Rhea" id="RHEA:13017"/>
        <dbReference type="ChEBI" id="CHEBI:17568"/>
        <dbReference type="ChEBI" id="CHEBI:33019"/>
        <dbReference type="ChEBI" id="CHEBI:57865"/>
        <dbReference type="ChEBI" id="CHEBI:58017"/>
        <dbReference type="EC" id="2.4.2.9"/>
    </reaction>
</comment>
<comment type="subunit">
    <text evidence="2">Homodimer and homohexamer; in equilibrium.</text>
</comment>
<comment type="similarity">
    <text evidence="2">Belongs to the purine/pyrimidine phosphoribosyltransferase family. PyrR subfamily.</text>
</comment>
<proteinExistence type="inferred from homology"/>
<evidence type="ECO:0000250" key="1"/>
<evidence type="ECO:0000255" key="2">
    <source>
        <dbReference type="HAMAP-Rule" id="MF_01219"/>
    </source>
</evidence>
<reference key="1">
    <citation type="journal article" date="2001" name="Science">
        <title>Comparative genomics of Listeria species.</title>
        <authorList>
            <person name="Glaser P."/>
            <person name="Frangeul L."/>
            <person name="Buchrieser C."/>
            <person name="Rusniok C."/>
            <person name="Amend A."/>
            <person name="Baquero F."/>
            <person name="Berche P."/>
            <person name="Bloecker H."/>
            <person name="Brandt P."/>
            <person name="Chakraborty T."/>
            <person name="Charbit A."/>
            <person name="Chetouani F."/>
            <person name="Couve E."/>
            <person name="de Daruvar A."/>
            <person name="Dehoux P."/>
            <person name="Domann E."/>
            <person name="Dominguez-Bernal G."/>
            <person name="Duchaud E."/>
            <person name="Durant L."/>
            <person name="Dussurget O."/>
            <person name="Entian K.-D."/>
            <person name="Fsihi H."/>
            <person name="Garcia-del Portillo F."/>
            <person name="Garrido P."/>
            <person name="Gautier L."/>
            <person name="Goebel W."/>
            <person name="Gomez-Lopez N."/>
            <person name="Hain T."/>
            <person name="Hauf J."/>
            <person name="Jackson D."/>
            <person name="Jones L.-M."/>
            <person name="Kaerst U."/>
            <person name="Kreft J."/>
            <person name="Kuhn M."/>
            <person name="Kunst F."/>
            <person name="Kurapkat G."/>
            <person name="Madueno E."/>
            <person name="Maitournam A."/>
            <person name="Mata Vicente J."/>
            <person name="Ng E."/>
            <person name="Nedjari H."/>
            <person name="Nordsiek G."/>
            <person name="Novella S."/>
            <person name="de Pablos B."/>
            <person name="Perez-Diaz J.-C."/>
            <person name="Purcell R."/>
            <person name="Remmel B."/>
            <person name="Rose M."/>
            <person name="Schlueter T."/>
            <person name="Simoes N."/>
            <person name="Tierrez A."/>
            <person name="Vazquez-Boland J.-A."/>
            <person name="Voss H."/>
            <person name="Wehland J."/>
            <person name="Cossart P."/>
        </authorList>
    </citation>
    <scope>NUCLEOTIDE SEQUENCE [LARGE SCALE GENOMIC DNA]</scope>
    <source>
        <strain>ATCC BAA-679 / EGD-e</strain>
    </source>
</reference>
<sequence length="183" mass="20504">MQKQVVVMDEAAIKRALTRVSYEIIERNKGTKNLALVGIKTRGIYLAERLHKRILEIEGIDVPVGDIDITLYRDDLSFKDDKTREPAVHGTNIPFDINGKKVVLVDDVLYTGRTVRAAMDALMDVGRPAQIHLAVLADRGHRELPIRADYVGKNIPTSGNERVEVRLTDVDHAEDAVIINKNE</sequence>
<gene>
    <name evidence="2" type="primary">pyrR</name>
    <name type="ordered locus">lmo1840</name>
</gene>
<keyword id="KW-0328">Glycosyltransferase</keyword>
<keyword id="KW-1185">Reference proteome</keyword>
<keyword id="KW-0694">RNA-binding</keyword>
<keyword id="KW-0804">Transcription</keyword>
<keyword id="KW-0805">Transcription regulation</keyword>
<keyword id="KW-0806">Transcription termination</keyword>
<keyword id="KW-0808">Transferase</keyword>
<dbReference type="EC" id="2.4.2.9" evidence="2"/>
<dbReference type="EMBL" id="AL591981">
    <property type="protein sequence ID" value="CAC99918.1"/>
    <property type="molecule type" value="Genomic_DNA"/>
</dbReference>
<dbReference type="PIR" id="AH1304">
    <property type="entry name" value="AH1304"/>
</dbReference>
<dbReference type="RefSeq" id="NP_465365.1">
    <property type="nucleotide sequence ID" value="NC_003210.1"/>
</dbReference>
<dbReference type="RefSeq" id="WP_003729510.1">
    <property type="nucleotide sequence ID" value="NZ_CP149495.1"/>
</dbReference>
<dbReference type="SMR" id="Q8Y660"/>
<dbReference type="STRING" id="169963.gene:17594525"/>
<dbReference type="PaxDb" id="169963-lmo1840"/>
<dbReference type="EnsemblBacteria" id="CAC99918">
    <property type="protein sequence ID" value="CAC99918"/>
    <property type="gene ID" value="CAC99918"/>
</dbReference>
<dbReference type="GeneID" id="985861"/>
<dbReference type="KEGG" id="lmo:lmo1840"/>
<dbReference type="PATRIC" id="fig|169963.11.peg.1885"/>
<dbReference type="eggNOG" id="COG2065">
    <property type="taxonomic scope" value="Bacteria"/>
</dbReference>
<dbReference type="HOGENOM" id="CLU_094234_2_1_9"/>
<dbReference type="OrthoDB" id="9802227at2"/>
<dbReference type="PhylomeDB" id="Q8Y660"/>
<dbReference type="BioCyc" id="LMON169963:LMO1840-MONOMER"/>
<dbReference type="Proteomes" id="UP000000817">
    <property type="component" value="Chromosome"/>
</dbReference>
<dbReference type="GO" id="GO:0003723">
    <property type="term" value="F:RNA binding"/>
    <property type="evidence" value="ECO:0007669"/>
    <property type="project" value="UniProtKB-UniRule"/>
</dbReference>
<dbReference type="GO" id="GO:0004845">
    <property type="term" value="F:uracil phosphoribosyltransferase activity"/>
    <property type="evidence" value="ECO:0007669"/>
    <property type="project" value="UniProtKB-UniRule"/>
</dbReference>
<dbReference type="GO" id="GO:0006353">
    <property type="term" value="P:DNA-templated transcription termination"/>
    <property type="evidence" value="ECO:0007669"/>
    <property type="project" value="UniProtKB-UniRule"/>
</dbReference>
<dbReference type="CDD" id="cd06223">
    <property type="entry name" value="PRTases_typeI"/>
    <property type="match status" value="1"/>
</dbReference>
<dbReference type="FunFam" id="3.40.50.2020:FF:000020">
    <property type="entry name" value="Bifunctional protein PyrR"/>
    <property type="match status" value="1"/>
</dbReference>
<dbReference type="Gene3D" id="3.40.50.2020">
    <property type="match status" value="1"/>
</dbReference>
<dbReference type="HAMAP" id="MF_01219">
    <property type="entry name" value="PyrR"/>
    <property type="match status" value="1"/>
</dbReference>
<dbReference type="InterPro" id="IPR000836">
    <property type="entry name" value="PRibTrfase_dom"/>
</dbReference>
<dbReference type="InterPro" id="IPR029057">
    <property type="entry name" value="PRTase-like"/>
</dbReference>
<dbReference type="InterPro" id="IPR023050">
    <property type="entry name" value="PyrR"/>
</dbReference>
<dbReference type="InterPro" id="IPR050137">
    <property type="entry name" value="PyrR_bifunctional"/>
</dbReference>
<dbReference type="NCBIfam" id="NF003545">
    <property type="entry name" value="PRK05205.1-1"/>
    <property type="match status" value="1"/>
</dbReference>
<dbReference type="NCBIfam" id="NF003548">
    <property type="entry name" value="PRK05205.1-4"/>
    <property type="match status" value="1"/>
</dbReference>
<dbReference type="NCBIfam" id="NF003549">
    <property type="entry name" value="PRK05205.1-5"/>
    <property type="match status" value="1"/>
</dbReference>
<dbReference type="PANTHER" id="PTHR11608">
    <property type="entry name" value="BIFUNCTIONAL PROTEIN PYRR"/>
    <property type="match status" value="1"/>
</dbReference>
<dbReference type="PANTHER" id="PTHR11608:SF0">
    <property type="entry name" value="BIFUNCTIONAL PROTEIN PYRR"/>
    <property type="match status" value="1"/>
</dbReference>
<dbReference type="Pfam" id="PF00156">
    <property type="entry name" value="Pribosyltran"/>
    <property type="match status" value="1"/>
</dbReference>
<dbReference type="SUPFAM" id="SSF53271">
    <property type="entry name" value="PRTase-like"/>
    <property type="match status" value="1"/>
</dbReference>
<protein>
    <recommendedName>
        <fullName evidence="2">Bifunctional protein PyrR</fullName>
    </recommendedName>
    <domain>
        <recommendedName>
            <fullName evidence="2">Pyrimidine operon regulatory protein</fullName>
        </recommendedName>
    </domain>
    <domain>
        <recommendedName>
            <fullName evidence="2">Uracil phosphoribosyltransferase</fullName>
            <shortName evidence="2">UPRTase</shortName>
            <ecNumber evidence="2">2.4.2.9</ecNumber>
        </recommendedName>
    </domain>
</protein>
<feature type="chain" id="PRO_0000183045" description="Bifunctional protein PyrR">
    <location>
        <begin position="1"/>
        <end position="183"/>
    </location>
</feature>
<feature type="short sequence motif" description="PRPP-binding" evidence="2">
    <location>
        <begin position="102"/>
        <end position="114"/>
    </location>
</feature>
<feature type="binding site" evidence="1">
    <location>
        <begin position="41"/>
        <end position="42"/>
    </location>
    <ligand>
        <name>substrate</name>
    </ligand>
</feature>
<feature type="binding site" evidence="1">
    <location>
        <begin position="106"/>
        <end position="114"/>
    </location>
    <ligand>
        <name>substrate</name>
    </ligand>
</feature>
<feature type="binding site" evidence="1">
    <location>
        <position position="139"/>
    </location>
    <ligand>
        <name>substrate</name>
    </ligand>
</feature>
<feature type="binding site" evidence="1">
    <location>
        <position position="163"/>
    </location>
    <ligand>
        <name>substrate</name>
    </ligand>
</feature>
<organism>
    <name type="scientific">Listeria monocytogenes serovar 1/2a (strain ATCC BAA-679 / EGD-e)</name>
    <dbReference type="NCBI Taxonomy" id="169963"/>
    <lineage>
        <taxon>Bacteria</taxon>
        <taxon>Bacillati</taxon>
        <taxon>Bacillota</taxon>
        <taxon>Bacilli</taxon>
        <taxon>Bacillales</taxon>
        <taxon>Listeriaceae</taxon>
        <taxon>Listeria</taxon>
    </lineage>
</organism>
<accession>Q8Y660</accession>
<name>PYRR_LISMO</name>